<accession>Q0GBX8</accession>
<dbReference type="EMBL" id="DQ875051">
    <property type="protein sequence ID" value="ABI47943.1"/>
    <property type="molecule type" value="Genomic_RNA"/>
</dbReference>
<dbReference type="SMR" id="Q0GBX8"/>
<dbReference type="Proteomes" id="UP000008618">
    <property type="component" value="Genome"/>
</dbReference>
<dbReference type="GO" id="GO:0043657">
    <property type="term" value="C:host cell"/>
    <property type="evidence" value="ECO:0007669"/>
    <property type="project" value="GOC"/>
</dbReference>
<dbReference type="GO" id="GO:0030430">
    <property type="term" value="C:host cell cytoplasm"/>
    <property type="evidence" value="ECO:0007669"/>
    <property type="project" value="UniProtKB-SubCell"/>
</dbReference>
<dbReference type="GO" id="GO:0042025">
    <property type="term" value="C:host cell nucleus"/>
    <property type="evidence" value="ECO:0007669"/>
    <property type="project" value="UniProtKB-SubCell"/>
</dbReference>
<dbReference type="GO" id="GO:0044423">
    <property type="term" value="C:virion component"/>
    <property type="evidence" value="ECO:0007669"/>
    <property type="project" value="UniProtKB-KW"/>
</dbReference>
<dbReference type="GO" id="GO:0003968">
    <property type="term" value="F:RNA-directed RNA polymerase activity"/>
    <property type="evidence" value="ECO:0007669"/>
    <property type="project" value="InterPro"/>
</dbReference>
<dbReference type="GO" id="GO:0075521">
    <property type="term" value="P:microtubule-dependent intracellular transport of viral material towards nucleus"/>
    <property type="evidence" value="ECO:0007669"/>
    <property type="project" value="UniProtKB-KW"/>
</dbReference>
<dbReference type="GO" id="GO:0046718">
    <property type="term" value="P:symbiont entry into host cell"/>
    <property type="evidence" value="ECO:0007669"/>
    <property type="project" value="UniProtKB-KW"/>
</dbReference>
<dbReference type="GO" id="GO:0039723">
    <property type="term" value="P:symbiont-mediated suppression of host cytoplasmic pattern recognition receptor signaling pathway via inhibition of TBK1 activity"/>
    <property type="evidence" value="ECO:0007669"/>
    <property type="project" value="UniProtKB-KW"/>
</dbReference>
<dbReference type="GO" id="GO:0039563">
    <property type="term" value="P:symbiont-mediated suppression of host JAK-STAT cascade via inhibition of STAT1 activity"/>
    <property type="evidence" value="ECO:0007669"/>
    <property type="project" value="UniProtKB-KW"/>
</dbReference>
<dbReference type="GO" id="GO:0039564">
    <property type="term" value="P:symbiont-mediated suppression of host JAK-STAT cascade via inhibition of STAT2 activity"/>
    <property type="evidence" value="ECO:0007669"/>
    <property type="project" value="UniProtKB-KW"/>
</dbReference>
<dbReference type="GO" id="GO:0039722">
    <property type="term" value="P:symbiont-mediated suppression of host toll-like receptor signaling pathway"/>
    <property type="evidence" value="ECO:0007669"/>
    <property type="project" value="UniProtKB-KW"/>
</dbReference>
<dbReference type="GO" id="GO:0039502">
    <property type="term" value="P:symbiont-mediated suppression of host type I interferon-mediated signaling pathway"/>
    <property type="evidence" value="ECO:0007669"/>
    <property type="project" value="UniProtKB-KW"/>
</dbReference>
<dbReference type="GO" id="GO:0019083">
    <property type="term" value="P:viral transcription"/>
    <property type="evidence" value="ECO:0007669"/>
    <property type="project" value="InterPro"/>
</dbReference>
<dbReference type="CDD" id="cd21032">
    <property type="entry name" value="RABV_P-protein-C_like"/>
    <property type="match status" value="1"/>
</dbReference>
<dbReference type="FunFam" id="1.20.120.820:FF:000001">
    <property type="entry name" value="Phosphoprotein"/>
    <property type="match status" value="1"/>
</dbReference>
<dbReference type="Gene3D" id="6.10.140.1560">
    <property type="match status" value="1"/>
</dbReference>
<dbReference type="Gene3D" id="1.20.120.820">
    <property type="entry name" value="Phosphoprotein, C-terminal domain"/>
    <property type="match status" value="1"/>
</dbReference>
<dbReference type="InterPro" id="IPR004259">
    <property type="entry name" value="PP_M1-like"/>
</dbReference>
<dbReference type="InterPro" id="IPR037199">
    <property type="entry name" value="PP_M1_C"/>
</dbReference>
<dbReference type="InterPro" id="IPR049506">
    <property type="entry name" value="RABV_P-like_C"/>
</dbReference>
<dbReference type="Pfam" id="PF03012">
    <property type="entry name" value="PP_M1"/>
    <property type="match status" value="1"/>
</dbReference>
<dbReference type="SUPFAM" id="SSF118173">
    <property type="entry name" value="Phosphoprotein M1, C-terminal domain"/>
    <property type="match status" value="1"/>
</dbReference>
<organism>
    <name type="scientific">Rabies virus (strain China/DRV)</name>
    <name type="common">RABV</name>
    <dbReference type="NCBI Taxonomy" id="445792"/>
    <lineage>
        <taxon>Viruses</taxon>
        <taxon>Riboviria</taxon>
        <taxon>Orthornavirae</taxon>
        <taxon>Negarnaviricota</taxon>
        <taxon>Haploviricotina</taxon>
        <taxon>Monjiviricetes</taxon>
        <taxon>Mononegavirales</taxon>
        <taxon>Rhabdoviridae</taxon>
        <taxon>Alpharhabdovirinae</taxon>
        <taxon>Lyssavirus</taxon>
        <taxon>Lyssavirus rabies</taxon>
    </lineage>
</organism>
<feature type="chain" id="PRO_0000295251" description="Phosphoprotein">
    <location>
        <begin position="1"/>
        <end position="297"/>
    </location>
</feature>
<feature type="region of interest" description="Disordered" evidence="3">
    <location>
        <begin position="58"/>
        <end position="82"/>
    </location>
</feature>
<feature type="region of interest" description="Disordered" evidence="3">
    <location>
        <begin position="132"/>
        <end position="189"/>
    </location>
</feature>
<feature type="region of interest" description="DYNLL1 and DYNLL2 binding" evidence="1">
    <location>
        <begin position="138"/>
        <end position="172"/>
    </location>
</feature>
<feature type="short sequence motif" description="Nuclear export signal" evidence="1">
    <location>
        <begin position="49"/>
        <end position="58"/>
    </location>
</feature>
<feature type="short sequence motif" description="Nuclear localization signal" evidence="1">
    <location>
        <begin position="211"/>
        <end position="214"/>
    </location>
</feature>
<feature type="compositionally biased region" description="Basic and acidic residues" evidence="3">
    <location>
        <begin position="71"/>
        <end position="80"/>
    </location>
</feature>
<feature type="compositionally biased region" description="Basic and acidic residues" evidence="3">
    <location>
        <begin position="140"/>
        <end position="157"/>
    </location>
</feature>
<feature type="compositionally biased region" description="Polar residues" evidence="3">
    <location>
        <begin position="158"/>
        <end position="180"/>
    </location>
</feature>
<feature type="modified residue" description="Phosphoserine; by host" evidence="1">
    <location>
        <position position="63"/>
    </location>
</feature>
<feature type="modified residue" description="Phosphoserine; by host" evidence="1">
    <location>
        <position position="64"/>
    </location>
</feature>
<feature type="modified residue" description="Phosphoserine; by host PKC" evidence="1">
    <location>
        <position position="162"/>
    </location>
</feature>
<feature type="modified residue" description="Phosphoserine; by host PKC" evidence="1">
    <location>
        <position position="210"/>
    </location>
</feature>
<feature type="modified residue" description="Phosphoserine; by host PKC" evidence="1">
    <location>
        <position position="271"/>
    </location>
</feature>
<feature type="splice variant" id="VSP_026901" description="In isoform P5." evidence="4">
    <location>
        <begin position="1"/>
        <end position="82"/>
    </location>
</feature>
<feature type="splice variant" id="VSP_026902" description="In isoform P4." evidence="4">
    <location>
        <begin position="1"/>
        <end position="68"/>
    </location>
</feature>
<feature type="splice variant" id="VSP_026903" description="In isoform P3." evidence="4">
    <location>
        <begin position="1"/>
        <end position="52"/>
    </location>
</feature>
<feature type="splice variant" id="VSP_026904" description="In isoform P2." evidence="4">
    <location>
        <begin position="1"/>
        <end position="19"/>
    </location>
</feature>
<comment type="function">
    <text evidence="1 2">Non catalytic polymerase cofactor and regulatory protein that plays a role in viral transcription and replication. Stabilizes the RNA polymerase L to the N-RNA template and binds the soluble protein N, preventing it from encapsidating non-genomic RNA. Also inhibits host IFN-alpha and IFN-beta signaling by binding and retaining phosphorylated STAT1 in the cytoplasm or by inhibiting the DNA binding of STAT1 in the nucleus. Might be involved, through interaction with host dynein, in intracellular microtubule-dependent virus transport of incoming virus from the synapse toward the cell body (By similarity). Inhibits interferon induction pathways by interacting with host TBK1 and preventing the formation of dynamic cytoplasmic condensates that have liquid properties and that are essential for interferon production (By similarity).</text>
</comment>
<comment type="subunit">
    <molecule>Phosphoprotein</molecule>
    <text evidence="2">Homotrimer when phosphorylated. This trimer is stabilized by binding to the L protein. Binds soluble protein N, and ribonucleocapsid. Interacts with host DYNLL1 and DYNLL2; this interaction may play a role in intracellular microtubule-dependent virus transport of incoming virus. Interacts with host STAT1, STAT2 and PML. Interacts with host TBK1.</text>
</comment>
<comment type="subunit">
    <molecule>Isoform P3</molecule>
    <text evidence="1">Binds host PML.</text>
</comment>
<comment type="subcellular location">
    <molecule>Phosphoprotein</molecule>
    <subcellularLocation>
        <location>Virion</location>
    </subcellularLocation>
    <subcellularLocation>
        <location evidence="1">Host cytoplasm</location>
    </subcellularLocation>
</comment>
<comment type="subcellular location">
    <molecule>Isoform P2</molecule>
    <subcellularLocation>
        <location evidence="1">Host cytoplasm</location>
    </subcellularLocation>
</comment>
<comment type="subcellular location">
    <molecule>Isoform P3</molecule>
    <subcellularLocation>
        <location evidence="1">Host nucleus</location>
    </subcellularLocation>
</comment>
<comment type="subcellular location">
    <molecule>Isoform P4</molecule>
    <subcellularLocation>
        <location evidence="1">Host nucleus</location>
    </subcellularLocation>
</comment>
<comment type="subcellular location">
    <molecule>Isoform P5</molecule>
    <subcellularLocation>
        <location evidence="1">Host nucleus</location>
    </subcellularLocation>
</comment>
<comment type="alternative products">
    <event type="alternative initiation"/>
    <isoform>
        <id>Q0GBX8-1</id>
        <name>P</name>
        <sequence type="displayed"/>
    </isoform>
    <isoform>
        <id>Q0GBX8-2</id>
        <name>P2</name>
        <sequence type="described" ref="VSP_026904"/>
    </isoform>
    <isoform>
        <id>Q0GBX8-3</id>
        <name>P3</name>
        <sequence type="described" ref="VSP_026903"/>
    </isoform>
    <isoform>
        <id>Q0GBX8-4</id>
        <name>P4</name>
        <sequence type="described" ref="VSP_026902"/>
    </isoform>
    <isoform>
        <id>Q0GBX8-5</id>
        <name>P5</name>
        <sequence type="described" ref="VSP_026901"/>
    </isoform>
</comment>
<comment type="PTM">
    <text evidence="1">Phosphorylated by host PKC and by an unknown kinase.</text>
</comment>
<comment type="similarity">
    <text evidence="4">Belongs to the lyssavirus protein P family.</text>
</comment>
<gene>
    <name type="primary">P</name>
</gene>
<evidence type="ECO:0000250" key="1"/>
<evidence type="ECO:0000250" key="2">
    <source>
        <dbReference type="UniProtKB" id="P16286"/>
    </source>
</evidence>
<evidence type="ECO:0000256" key="3">
    <source>
        <dbReference type="SAM" id="MobiDB-lite"/>
    </source>
</evidence>
<evidence type="ECO:0000305" key="4"/>
<sequence>MSKIFVNPSAIRAGLADLEMAEETVDLINKNIEDNQAHLQGEPIEVDNLPEDMSRLHLDDGKSSDLGKMSKAGEGKHQEDFQMDEGEDPSLLFQHYLDNVGVQIVRQMRSGERFLKIWSQTVEEIISYVTVNFPNPSGRSSEDKSTQTTSREPKKETTSTPSQRESQSSKSRTAAQTASGPPSFEWSATNEEDDLSVEAEIAHQIAESFSKKYKFPSRSSGIFSYNFEQLKMNLDDIVKEAKNVPGVTRLAHDESKLPLRCVLGWVALANSKKFQLLVEANKLNKIMQDDLNRYESC</sequence>
<keyword id="KW-0024">Alternative initiation</keyword>
<keyword id="KW-0143">Chaperone</keyword>
<keyword id="KW-1176">Cytoplasmic inwards viral transport</keyword>
<keyword id="KW-1035">Host cytoplasm</keyword>
<keyword id="KW-1048">Host nucleus</keyword>
<keyword id="KW-0945">Host-virus interaction</keyword>
<keyword id="KW-1090">Inhibition of host innate immune response by virus</keyword>
<keyword id="KW-1114">Inhibition of host interferon signaling pathway by virus</keyword>
<keyword id="KW-1105">Inhibition of host STAT1 by virus</keyword>
<keyword id="KW-1106">Inhibition of host STAT2 by virus</keyword>
<keyword id="KW-1223">Inhibition of host TBK1 by virus</keyword>
<keyword id="KW-1225">Inhibition of host TLR pathway by virus</keyword>
<keyword id="KW-0922">Interferon antiviral system evasion</keyword>
<keyword id="KW-1177">Microtubular inwards viral transport</keyword>
<keyword id="KW-0597">Phosphoprotein</keyword>
<keyword id="KW-0899">Viral immunoevasion</keyword>
<keyword id="KW-0693">Viral RNA replication</keyword>
<keyword id="KW-0946">Virion</keyword>
<keyword id="KW-1160">Virus entry into host cell</keyword>
<organismHost>
    <name type="scientific">Homo sapiens</name>
    <name type="common">Human</name>
    <dbReference type="NCBI Taxonomy" id="9606"/>
</organismHost>
<organismHost>
    <name type="scientific">Mammalia</name>
    <dbReference type="NCBI Taxonomy" id="40674"/>
</organismHost>
<name>PHOSP_RABVD</name>
<reference key="1">
    <citation type="submission" date="2006-08" db="EMBL/GenBank/DDBJ databases">
        <authorList>
            <person name="Zhao Y.J."/>
            <person name="Guo L."/>
            <person name="Huang Y."/>
            <person name="Qian A.D."/>
        </authorList>
    </citation>
    <scope>NUCLEOTIDE SEQUENCE [GENOMIC RNA]</scope>
</reference>
<protein>
    <recommendedName>
        <fullName>Phosphoprotein</fullName>
        <shortName>Protein P</shortName>
    </recommendedName>
    <alternativeName>
        <fullName>Protein M1</fullName>
    </alternativeName>
</protein>
<proteinExistence type="inferred from homology"/>